<evidence type="ECO:0000255" key="1">
    <source>
        <dbReference type="HAMAP-Rule" id="MF_03041"/>
    </source>
</evidence>
<evidence type="ECO:0000256" key="2">
    <source>
        <dbReference type="SAM" id="MobiDB-lite"/>
    </source>
</evidence>
<accession>Q6NRW2</accession>
<reference key="1">
    <citation type="submission" date="2004-05" db="EMBL/GenBank/DDBJ databases">
        <authorList>
            <consortium name="NIH - Xenopus Gene Collection (XGC) project"/>
        </authorList>
    </citation>
    <scope>NUCLEOTIDE SEQUENCE [LARGE SCALE MRNA]</scope>
    <source>
        <tissue>Ovary</tissue>
    </source>
</reference>
<protein>
    <recommendedName>
        <fullName evidence="1">Protein Spindly-B</fullName>
    </recommendedName>
    <alternativeName>
        <fullName evidence="1">Coiled-coil domain-containing protein 99-B</fullName>
    </alternativeName>
    <alternativeName>
        <fullName evidence="1">Spindle apparatus coiled-coil domain-containing protein 1-B</fullName>
    </alternativeName>
</protein>
<keyword id="KW-0131">Cell cycle</keyword>
<keyword id="KW-0132">Cell division</keyword>
<keyword id="KW-0137">Centromere</keyword>
<keyword id="KW-0158">Chromosome</keyword>
<keyword id="KW-0175">Coiled coil</keyword>
<keyword id="KW-0995">Kinetochore</keyword>
<keyword id="KW-0498">Mitosis</keyword>
<keyword id="KW-1185">Reference proteome</keyword>
<proteinExistence type="evidence at transcript level"/>
<comment type="function">
    <text evidence="1">Required for the localization of dynein and dynactin to the mitotic kintochore. Dynein is believed to control the initial lateral interaction between the kinetochore and spindle microtubules and to facilitate the subsequent formation of end-on kinetochore-microtubule attachments mediated by the NDC80 complex.</text>
</comment>
<comment type="subcellular location">
    <subcellularLocation>
        <location evidence="1">Chromosome</location>
        <location evidence="1">Centromere</location>
        <location evidence="1">Kinetochore</location>
    </subcellularLocation>
</comment>
<comment type="similarity">
    <text evidence="1">Belongs to the Spindly family.</text>
</comment>
<dbReference type="EMBL" id="BC070598">
    <property type="protein sequence ID" value="AAH70598.1"/>
    <property type="molecule type" value="mRNA"/>
</dbReference>
<dbReference type="RefSeq" id="NP_001084803.1">
    <property type="nucleotide sequence ID" value="NM_001091334.1"/>
</dbReference>
<dbReference type="SMR" id="Q6NRW2"/>
<dbReference type="DNASU" id="431843"/>
<dbReference type="GeneID" id="431843"/>
<dbReference type="KEGG" id="xla:431843"/>
<dbReference type="AGR" id="Xenbase:XB-GENE-6251766"/>
<dbReference type="CTD" id="431843"/>
<dbReference type="Xenbase" id="XB-GENE-6251766">
    <property type="gene designation" value="spdl1.S"/>
</dbReference>
<dbReference type="OrthoDB" id="2121607at2759"/>
<dbReference type="Proteomes" id="UP000186698">
    <property type="component" value="Chromosome 3S"/>
</dbReference>
<dbReference type="Bgee" id="431843">
    <property type="expression patterns" value="Expressed in egg cell and 19 other cell types or tissues"/>
</dbReference>
<dbReference type="GO" id="GO:0005634">
    <property type="term" value="C:nucleus"/>
    <property type="evidence" value="ECO:0000250"/>
    <property type="project" value="UniProtKB"/>
</dbReference>
<dbReference type="GO" id="GO:0000940">
    <property type="term" value="C:outer kinetochore"/>
    <property type="evidence" value="ECO:0000250"/>
    <property type="project" value="UniProtKB"/>
</dbReference>
<dbReference type="GO" id="GO:0000922">
    <property type="term" value="C:spindle pole"/>
    <property type="evidence" value="ECO:0000250"/>
    <property type="project" value="UniProtKB"/>
</dbReference>
<dbReference type="GO" id="GO:0043515">
    <property type="term" value="F:kinetochore binding"/>
    <property type="evidence" value="ECO:0000250"/>
    <property type="project" value="UniProtKB"/>
</dbReference>
<dbReference type="GO" id="GO:0051301">
    <property type="term" value="P:cell division"/>
    <property type="evidence" value="ECO:0007669"/>
    <property type="project" value="UniProtKB-KW"/>
</dbReference>
<dbReference type="GO" id="GO:0000132">
    <property type="term" value="P:establishment of mitotic spindle orientation"/>
    <property type="evidence" value="ECO:0000250"/>
    <property type="project" value="UniProtKB"/>
</dbReference>
<dbReference type="GO" id="GO:0007080">
    <property type="term" value="P:mitotic metaphase chromosome alignment"/>
    <property type="evidence" value="ECO:0000250"/>
    <property type="project" value="UniProtKB"/>
</dbReference>
<dbReference type="GO" id="GO:0007094">
    <property type="term" value="P:mitotic spindle assembly checkpoint signaling"/>
    <property type="evidence" value="ECO:0007669"/>
    <property type="project" value="InterPro"/>
</dbReference>
<dbReference type="GO" id="GO:0034501">
    <property type="term" value="P:protein localization to kinetochore"/>
    <property type="evidence" value="ECO:0000250"/>
    <property type="project" value="UniProtKB"/>
</dbReference>
<dbReference type="HAMAP" id="MF_03041">
    <property type="entry name" value="SPDLY"/>
    <property type="match status" value="1"/>
</dbReference>
<dbReference type="InterPro" id="IPR028593">
    <property type="entry name" value="SPDLY_chordates"/>
</dbReference>
<dbReference type="InterPro" id="IPR051149">
    <property type="entry name" value="Spindly/BICDR_Dynein_Adapter"/>
</dbReference>
<dbReference type="PANTHER" id="PTHR32123">
    <property type="entry name" value="BICD FAMILY-LIKE CARGO ADAPTER"/>
    <property type="match status" value="1"/>
</dbReference>
<dbReference type="PANTHER" id="PTHR32123:SF9">
    <property type="entry name" value="PROTEIN SPINDLY"/>
    <property type="match status" value="1"/>
</dbReference>
<organism>
    <name type="scientific">Xenopus laevis</name>
    <name type="common">African clawed frog</name>
    <dbReference type="NCBI Taxonomy" id="8355"/>
    <lineage>
        <taxon>Eukaryota</taxon>
        <taxon>Metazoa</taxon>
        <taxon>Chordata</taxon>
        <taxon>Craniata</taxon>
        <taxon>Vertebrata</taxon>
        <taxon>Euteleostomi</taxon>
        <taxon>Amphibia</taxon>
        <taxon>Batrachia</taxon>
        <taxon>Anura</taxon>
        <taxon>Pipoidea</taxon>
        <taxon>Pipidae</taxon>
        <taxon>Xenopodinae</taxon>
        <taxon>Xenopus</taxon>
        <taxon>Xenopus</taxon>
    </lineage>
</organism>
<name>SPDLB_XENLA</name>
<gene>
    <name type="primary">spdl1-b</name>
    <name type="synonym">ccdc99-b</name>
</gene>
<feature type="chain" id="PRO_0000383344" description="Protein Spindly-B">
    <location>
        <begin position="1"/>
        <end position="610"/>
    </location>
</feature>
<feature type="region of interest" description="Disordered" evidence="2">
    <location>
        <begin position="474"/>
        <end position="610"/>
    </location>
</feature>
<feature type="coiled-coil region" evidence="1">
    <location>
        <begin position="1"/>
        <end position="392"/>
    </location>
</feature>
<feature type="compositionally biased region" description="Basic and acidic residues" evidence="2">
    <location>
        <begin position="493"/>
        <end position="511"/>
    </location>
</feature>
<feature type="compositionally biased region" description="Basic and acidic residues" evidence="2">
    <location>
        <begin position="535"/>
        <end position="548"/>
    </location>
</feature>
<feature type="compositionally biased region" description="Polar residues" evidence="2">
    <location>
        <begin position="549"/>
        <end position="561"/>
    </location>
</feature>
<feature type="compositionally biased region" description="Basic and acidic residues" evidence="2">
    <location>
        <begin position="570"/>
        <end position="583"/>
    </location>
</feature>
<sequence>MEESETVLKLRRQLKEAEEERVKAAHYGLELLESQSDLQNQLEEQRNEMTGTIENLEQEKYSLQREVELKNRMLESLTSECENIRQQQKLSLEQLEEQLERNHHRELSEIKDKLEKLKAELDEARLSEKQLKHKLDYQTEVLANKSEELRMMSERVHETMSSEMLTLQLEKTELETAKDNLEQELNELQYREQQLLLTNGNQSRQLERLQTEKEEREKEAVGYFSALEKAREANQDLQAQLDIALQQAQDPNSKGNSLFAEVEDRRSEMERQLISMKVQFQSLQKQHAFSRQQMHRMKIQIATLLQLKGSHSDPEQLERLQAMVAQKNSEIETLVMKVRQLEKSQQICENGPVASSCDGLGQGDETYYVDLLKMKLVNSSKEIDKVKDELSLQRMKALAESQRVLELERKLFTNDRHLKLSQGENMKLRVNLDEMKMKYEPDEMGKIRTQKRRKEQLPLDCLIDNTSVAVTSGTEAHGVSDATPGETCTAESSDDKKLPKEDLSLSTKDQDPSSVLLKPNEPPNGQPPKERKRVRIMEDEKDTPDLNKRNPNNCTITSIHPRSTYEESTSELKKVDEEQEKRKQERKSRLRAPPVLHVPSKPATAQCPQQ</sequence>